<dbReference type="EC" id="4.2.1.20" evidence="1"/>
<dbReference type="EMBL" id="L42023">
    <property type="protein sequence ID" value="AAC23079.1"/>
    <property type="molecule type" value="Genomic_DNA"/>
</dbReference>
<dbReference type="PIR" id="A64123">
    <property type="entry name" value="A64123"/>
</dbReference>
<dbReference type="RefSeq" id="NP_439581.1">
    <property type="nucleotide sequence ID" value="NC_000907.1"/>
</dbReference>
<dbReference type="SMR" id="P43759"/>
<dbReference type="STRING" id="71421.HI_1432"/>
<dbReference type="EnsemblBacteria" id="AAC23079">
    <property type="protein sequence ID" value="AAC23079"/>
    <property type="gene ID" value="HI_1432"/>
</dbReference>
<dbReference type="KEGG" id="hin:HI_1432"/>
<dbReference type="PATRIC" id="fig|71421.8.peg.1489"/>
<dbReference type="eggNOG" id="COG0159">
    <property type="taxonomic scope" value="Bacteria"/>
</dbReference>
<dbReference type="HOGENOM" id="CLU_016734_0_4_6"/>
<dbReference type="OrthoDB" id="9804578at2"/>
<dbReference type="PhylomeDB" id="P43759"/>
<dbReference type="BioCyc" id="HINF71421:G1GJ1-1455-MONOMER"/>
<dbReference type="UniPathway" id="UPA00035">
    <property type="reaction ID" value="UER00044"/>
</dbReference>
<dbReference type="Proteomes" id="UP000000579">
    <property type="component" value="Chromosome"/>
</dbReference>
<dbReference type="GO" id="GO:0005829">
    <property type="term" value="C:cytosol"/>
    <property type="evidence" value="ECO:0000318"/>
    <property type="project" value="GO_Central"/>
</dbReference>
<dbReference type="GO" id="GO:0004834">
    <property type="term" value="F:tryptophan synthase activity"/>
    <property type="evidence" value="ECO:0000318"/>
    <property type="project" value="GO_Central"/>
</dbReference>
<dbReference type="GO" id="GO:0000162">
    <property type="term" value="P:L-tryptophan biosynthetic process"/>
    <property type="evidence" value="ECO:0000318"/>
    <property type="project" value="GO_Central"/>
</dbReference>
<dbReference type="CDD" id="cd04724">
    <property type="entry name" value="Tryptophan_synthase_alpha"/>
    <property type="match status" value="1"/>
</dbReference>
<dbReference type="FunFam" id="3.20.20.70:FF:000037">
    <property type="entry name" value="Tryptophan synthase alpha chain"/>
    <property type="match status" value="1"/>
</dbReference>
<dbReference type="Gene3D" id="3.20.20.70">
    <property type="entry name" value="Aldolase class I"/>
    <property type="match status" value="1"/>
</dbReference>
<dbReference type="HAMAP" id="MF_00131">
    <property type="entry name" value="Trp_synth_alpha"/>
    <property type="match status" value="1"/>
</dbReference>
<dbReference type="InterPro" id="IPR013785">
    <property type="entry name" value="Aldolase_TIM"/>
</dbReference>
<dbReference type="InterPro" id="IPR011060">
    <property type="entry name" value="RibuloseP-bd_barrel"/>
</dbReference>
<dbReference type="InterPro" id="IPR018204">
    <property type="entry name" value="Trp_synthase_alpha_AS"/>
</dbReference>
<dbReference type="InterPro" id="IPR002028">
    <property type="entry name" value="Trp_synthase_suA"/>
</dbReference>
<dbReference type="NCBIfam" id="TIGR00262">
    <property type="entry name" value="trpA"/>
    <property type="match status" value="1"/>
</dbReference>
<dbReference type="PANTHER" id="PTHR43406:SF1">
    <property type="entry name" value="TRYPTOPHAN SYNTHASE ALPHA CHAIN, CHLOROPLASTIC"/>
    <property type="match status" value="1"/>
</dbReference>
<dbReference type="PANTHER" id="PTHR43406">
    <property type="entry name" value="TRYPTOPHAN SYNTHASE, ALPHA CHAIN"/>
    <property type="match status" value="1"/>
</dbReference>
<dbReference type="Pfam" id="PF00290">
    <property type="entry name" value="Trp_syntA"/>
    <property type="match status" value="1"/>
</dbReference>
<dbReference type="SUPFAM" id="SSF51366">
    <property type="entry name" value="Ribulose-phoshate binding barrel"/>
    <property type="match status" value="1"/>
</dbReference>
<dbReference type="PROSITE" id="PS00167">
    <property type="entry name" value="TRP_SYNTHASE_ALPHA"/>
    <property type="match status" value="1"/>
</dbReference>
<keyword id="KW-0028">Amino-acid biosynthesis</keyword>
<keyword id="KW-0057">Aromatic amino acid biosynthesis</keyword>
<keyword id="KW-0456">Lyase</keyword>
<keyword id="KW-1185">Reference proteome</keyword>
<keyword id="KW-0822">Tryptophan biosynthesis</keyword>
<feature type="chain" id="PRO_0000098787" description="Tryptophan synthase alpha chain">
    <location>
        <begin position="1"/>
        <end position="268"/>
    </location>
</feature>
<feature type="active site" description="Proton acceptor" evidence="1">
    <location>
        <position position="49"/>
    </location>
</feature>
<feature type="active site" description="Proton acceptor" evidence="1">
    <location>
        <position position="60"/>
    </location>
</feature>
<evidence type="ECO:0000255" key="1">
    <source>
        <dbReference type="HAMAP-Rule" id="MF_00131"/>
    </source>
</evidence>
<organism>
    <name type="scientific">Haemophilus influenzae (strain ATCC 51907 / DSM 11121 / KW20 / Rd)</name>
    <dbReference type="NCBI Taxonomy" id="71421"/>
    <lineage>
        <taxon>Bacteria</taxon>
        <taxon>Pseudomonadati</taxon>
        <taxon>Pseudomonadota</taxon>
        <taxon>Gammaproteobacteria</taxon>
        <taxon>Pasteurellales</taxon>
        <taxon>Pasteurellaceae</taxon>
        <taxon>Haemophilus</taxon>
    </lineage>
</organism>
<accession>P43759</accession>
<reference key="1">
    <citation type="journal article" date="1995" name="Science">
        <title>Whole-genome random sequencing and assembly of Haemophilus influenzae Rd.</title>
        <authorList>
            <person name="Fleischmann R.D."/>
            <person name="Adams M.D."/>
            <person name="White O."/>
            <person name="Clayton R.A."/>
            <person name="Kirkness E.F."/>
            <person name="Kerlavage A.R."/>
            <person name="Bult C.J."/>
            <person name="Tomb J.-F."/>
            <person name="Dougherty B.A."/>
            <person name="Merrick J.M."/>
            <person name="McKenney K."/>
            <person name="Sutton G.G."/>
            <person name="FitzHugh W."/>
            <person name="Fields C.A."/>
            <person name="Gocayne J.D."/>
            <person name="Scott J.D."/>
            <person name="Shirley R."/>
            <person name="Liu L.-I."/>
            <person name="Glodek A."/>
            <person name="Kelley J.M."/>
            <person name="Weidman J.F."/>
            <person name="Phillips C.A."/>
            <person name="Spriggs T."/>
            <person name="Hedblom E."/>
            <person name="Cotton M.D."/>
            <person name="Utterback T.R."/>
            <person name="Hanna M.C."/>
            <person name="Nguyen D.T."/>
            <person name="Saudek D.M."/>
            <person name="Brandon R.C."/>
            <person name="Fine L.D."/>
            <person name="Fritchman J.L."/>
            <person name="Fuhrmann J.L."/>
            <person name="Geoghagen N.S.M."/>
            <person name="Gnehm C.L."/>
            <person name="McDonald L.A."/>
            <person name="Small K.V."/>
            <person name="Fraser C.M."/>
            <person name="Smith H.O."/>
            <person name="Venter J.C."/>
        </authorList>
    </citation>
    <scope>NUCLEOTIDE SEQUENCE [LARGE SCALE GENOMIC DNA]</scope>
    <source>
        <strain>ATCC 51907 / DSM 11121 / KW20 / Rd</strain>
    </source>
</reference>
<proteinExistence type="inferred from homology"/>
<name>TRPA_HAEIN</name>
<sequence length="268" mass="28731">MSRFETQFATLNAKNEGAFVPFVTLCDPTFDRSFEIICTLVDNGADALELGFPFSDPLLDGPVIQAANNRALTAGHSSEDSLKLLEKVRSKYPEIPISLLLCANLIFAKGLDAFYQRCAEVGVDAVLVADIPLLAKGDYVQTAKKHGIQPVFICPPNADEKTIQGVAKNSEGYTYLVSRAGVTSAENQAHAANLDTLVEKLKAHNAPPILQGFGIAQPEQVKEALSLGTAGAISGSATVKIIERNLDNHEQCLAELAEFVQTMKAATK</sequence>
<gene>
    <name evidence="1" type="primary">trpA</name>
    <name type="ordered locus">HI_1432</name>
</gene>
<protein>
    <recommendedName>
        <fullName evidence="1">Tryptophan synthase alpha chain</fullName>
        <ecNumber evidence="1">4.2.1.20</ecNumber>
    </recommendedName>
</protein>
<comment type="function">
    <text evidence="1">The alpha subunit is responsible for the aldol cleavage of indoleglycerol phosphate to indole and glyceraldehyde 3-phosphate.</text>
</comment>
<comment type="catalytic activity">
    <reaction evidence="1">
        <text>(1S,2R)-1-C-(indol-3-yl)glycerol 3-phosphate + L-serine = D-glyceraldehyde 3-phosphate + L-tryptophan + H2O</text>
        <dbReference type="Rhea" id="RHEA:10532"/>
        <dbReference type="ChEBI" id="CHEBI:15377"/>
        <dbReference type="ChEBI" id="CHEBI:33384"/>
        <dbReference type="ChEBI" id="CHEBI:57912"/>
        <dbReference type="ChEBI" id="CHEBI:58866"/>
        <dbReference type="ChEBI" id="CHEBI:59776"/>
        <dbReference type="EC" id="4.2.1.20"/>
    </reaction>
</comment>
<comment type="pathway">
    <text evidence="1">Amino-acid biosynthesis; L-tryptophan biosynthesis; L-tryptophan from chorismate: step 5/5.</text>
</comment>
<comment type="subunit">
    <text evidence="1">Tetramer of two alpha and two beta chains.</text>
</comment>
<comment type="similarity">
    <text evidence="1">Belongs to the TrpA family.</text>
</comment>